<evidence type="ECO:0000250" key="1"/>
<evidence type="ECO:0000255" key="2"/>
<evidence type="ECO:0000305" key="3"/>
<comment type="function">
    <text evidence="1">Involved in the efflux of threonine and homoserine.</text>
</comment>
<comment type="subcellular location">
    <subcellularLocation>
        <location evidence="1">Cell inner membrane</location>
        <topology evidence="1">Multi-pass membrane protein</topology>
    </subcellularLocation>
</comment>
<comment type="similarity">
    <text evidence="3">Belongs to the drug/metabolite transporter (DMT) superfamily. 10 TMS drug/metabolite exporter (DME) (TC 2.A.7.3) family.</text>
</comment>
<comment type="sequence caution" evidence="3">
    <conflict type="erroneous initiation">
        <sequence resource="EMBL-CDS" id="AAN79372"/>
    </conflict>
    <text>Extended N-terminus.</text>
</comment>
<dbReference type="EMBL" id="AE014075">
    <property type="protein sequence ID" value="AAN79372.1"/>
    <property type="status" value="ALT_INIT"/>
    <property type="molecule type" value="Genomic_DNA"/>
</dbReference>
<dbReference type="RefSeq" id="WP_001295297.1">
    <property type="nucleotide sequence ID" value="NZ_CP051263.1"/>
</dbReference>
<dbReference type="SMR" id="P0AA68"/>
<dbReference type="STRING" id="199310.c0899"/>
<dbReference type="GeneID" id="93776615"/>
<dbReference type="KEGG" id="ecc:c0899"/>
<dbReference type="eggNOG" id="COG5006">
    <property type="taxonomic scope" value="Bacteria"/>
</dbReference>
<dbReference type="HOGENOM" id="CLU_057295_0_1_6"/>
<dbReference type="Proteomes" id="UP000001410">
    <property type="component" value="Chromosome"/>
</dbReference>
<dbReference type="GO" id="GO:0005886">
    <property type="term" value="C:plasma membrane"/>
    <property type="evidence" value="ECO:0007669"/>
    <property type="project" value="UniProtKB-SubCell"/>
</dbReference>
<dbReference type="GO" id="GO:0006865">
    <property type="term" value="P:amino acid transport"/>
    <property type="evidence" value="ECO:0007669"/>
    <property type="project" value="UniProtKB-KW"/>
</dbReference>
<dbReference type="InterPro" id="IPR050638">
    <property type="entry name" value="AA-Vitamin_Transporters"/>
</dbReference>
<dbReference type="InterPro" id="IPR000620">
    <property type="entry name" value="EamA_dom"/>
</dbReference>
<dbReference type="NCBIfam" id="NF007823">
    <property type="entry name" value="PRK10532.1"/>
    <property type="match status" value="1"/>
</dbReference>
<dbReference type="PANTHER" id="PTHR32322">
    <property type="entry name" value="INNER MEMBRANE TRANSPORTER"/>
    <property type="match status" value="1"/>
</dbReference>
<dbReference type="PANTHER" id="PTHR32322:SF18">
    <property type="entry name" value="S-ADENOSYLMETHIONINE_S-ADENOSYLHOMOCYSTEINE TRANSPORTER"/>
    <property type="match status" value="1"/>
</dbReference>
<dbReference type="Pfam" id="PF00892">
    <property type="entry name" value="EamA"/>
    <property type="match status" value="1"/>
</dbReference>
<dbReference type="SUPFAM" id="SSF103481">
    <property type="entry name" value="Multidrug resistance efflux transporter EmrE"/>
    <property type="match status" value="2"/>
</dbReference>
<reference key="1">
    <citation type="journal article" date="2002" name="Proc. Natl. Acad. Sci. U.S.A.">
        <title>Extensive mosaic structure revealed by the complete genome sequence of uropathogenic Escherichia coli.</title>
        <authorList>
            <person name="Welch R.A."/>
            <person name="Burland V."/>
            <person name="Plunkett G. III"/>
            <person name="Redford P."/>
            <person name="Roesch P."/>
            <person name="Rasko D."/>
            <person name="Buckles E.L."/>
            <person name="Liou S.-R."/>
            <person name="Boutin A."/>
            <person name="Hackett J."/>
            <person name="Stroud D."/>
            <person name="Mayhew G.F."/>
            <person name="Rose D.J."/>
            <person name="Zhou S."/>
            <person name="Schwartz D.C."/>
            <person name="Perna N.T."/>
            <person name="Mobley H.L.T."/>
            <person name="Donnenberg M.S."/>
            <person name="Blattner F.R."/>
        </authorList>
    </citation>
    <scope>NUCLEOTIDE SEQUENCE [LARGE SCALE GENOMIC DNA]</scope>
    <source>
        <strain>CFT073 / ATCC 700928 / UPEC</strain>
    </source>
</reference>
<sequence>MPGSLRKMPVWLPIVILLVAMASIQGGASLAKSLFPLVGAPGVTALRLALGTLILIAFFKPWRLRFAKEQRLPLLFYGVSLGGMNYLFYLSIQTVPLGIAVALEFTGPLAVALFSSRRPVDFVWVVLAVLGLWFLLPLGQDVSHVDLTGCALALGAGACWAIYILSGQRAGAEHGPATVAIGSLIAALIFVPIGALQAGEALWHWSVIPLGLAVAILSTALPYSLEMIALTRLPTRTFGTLMSMEPALAAVSGMIFLGETLTPIQLLALGAIIAASMGSTLTVRKESKIKELDIN</sequence>
<keyword id="KW-0029">Amino-acid transport</keyword>
<keyword id="KW-0997">Cell inner membrane</keyword>
<keyword id="KW-1003">Cell membrane</keyword>
<keyword id="KW-0472">Membrane</keyword>
<keyword id="KW-1185">Reference proteome</keyword>
<keyword id="KW-0677">Repeat</keyword>
<keyword id="KW-0812">Transmembrane</keyword>
<keyword id="KW-1133">Transmembrane helix</keyword>
<keyword id="KW-0813">Transport</keyword>
<accession>P0AA68</accession>
<accession>P36545</accession>
<accession>P75784</accession>
<name>RHTA_ECOL6</name>
<organism>
    <name type="scientific">Escherichia coli O6:H1 (strain CFT073 / ATCC 700928 / UPEC)</name>
    <dbReference type="NCBI Taxonomy" id="199310"/>
    <lineage>
        <taxon>Bacteria</taxon>
        <taxon>Pseudomonadati</taxon>
        <taxon>Pseudomonadota</taxon>
        <taxon>Gammaproteobacteria</taxon>
        <taxon>Enterobacterales</taxon>
        <taxon>Enterobacteriaceae</taxon>
        <taxon>Escherichia</taxon>
    </lineage>
</organism>
<proteinExistence type="inferred from homology"/>
<gene>
    <name type="primary">rhtA</name>
    <name type="ordered locus">c0899</name>
</gene>
<feature type="chain" id="PRO_0000108163" description="Threonine/homoserine exporter RhtA">
    <location>
        <begin position="1"/>
        <end position="295"/>
    </location>
</feature>
<feature type="topological domain" description="Cytoplasmic" evidence="2">
    <location>
        <begin position="1"/>
        <end position="9"/>
    </location>
</feature>
<feature type="transmembrane region" description="Helical" evidence="2">
    <location>
        <begin position="10"/>
        <end position="30"/>
    </location>
</feature>
<feature type="topological domain" description="Periplasmic" evidence="2">
    <location>
        <begin position="31"/>
        <end position="38"/>
    </location>
</feature>
<feature type="transmembrane region" description="Helical" evidence="2">
    <location>
        <begin position="39"/>
        <end position="59"/>
    </location>
</feature>
<feature type="topological domain" description="Cytoplasmic" evidence="2">
    <location>
        <begin position="60"/>
        <end position="71"/>
    </location>
</feature>
<feature type="transmembrane region" description="Helical" evidence="2">
    <location>
        <begin position="72"/>
        <end position="92"/>
    </location>
</feature>
<feature type="topological domain" description="Periplasmic" evidence="2">
    <location>
        <position position="93"/>
    </location>
</feature>
<feature type="transmembrane region" description="Helical" evidence="2">
    <location>
        <begin position="94"/>
        <end position="114"/>
    </location>
</feature>
<feature type="topological domain" description="Cytoplasmic" evidence="2">
    <location>
        <begin position="115"/>
        <end position="118"/>
    </location>
</feature>
<feature type="transmembrane region" description="Helical" evidence="2">
    <location>
        <begin position="119"/>
        <end position="139"/>
    </location>
</feature>
<feature type="topological domain" description="Periplasmic" evidence="2">
    <location>
        <begin position="140"/>
        <end position="146"/>
    </location>
</feature>
<feature type="transmembrane region" description="Helical" evidence="2">
    <location>
        <begin position="147"/>
        <end position="167"/>
    </location>
</feature>
<feature type="topological domain" description="Cytoplasmic" evidence="2">
    <location>
        <begin position="168"/>
        <end position="175"/>
    </location>
</feature>
<feature type="transmembrane region" description="Helical" evidence="2">
    <location>
        <begin position="176"/>
        <end position="196"/>
    </location>
</feature>
<feature type="topological domain" description="Periplasmic" evidence="2">
    <location>
        <begin position="197"/>
        <end position="200"/>
    </location>
</feature>
<feature type="transmembrane region" description="Helical" evidence="2">
    <location>
        <begin position="201"/>
        <end position="221"/>
    </location>
</feature>
<feature type="topological domain" description="Cytoplasmic" evidence="2">
    <location>
        <begin position="222"/>
        <end position="237"/>
    </location>
</feature>
<feature type="transmembrane region" description="Helical" evidence="2">
    <location>
        <begin position="238"/>
        <end position="258"/>
    </location>
</feature>
<feature type="topological domain" description="Periplasmic" evidence="2">
    <location>
        <begin position="259"/>
        <end position="262"/>
    </location>
</feature>
<feature type="transmembrane region" description="Helical" evidence="2">
    <location>
        <begin position="263"/>
        <end position="283"/>
    </location>
</feature>
<feature type="topological domain" description="Cytoplasmic" evidence="2">
    <location>
        <begin position="284"/>
        <end position="295"/>
    </location>
</feature>
<feature type="domain" description="EamA 1">
    <location>
        <begin position="30"/>
        <end position="135"/>
    </location>
</feature>
<feature type="domain" description="EamA 2">
    <location>
        <begin position="159"/>
        <end position="278"/>
    </location>
</feature>
<protein>
    <recommendedName>
        <fullName>Threonine/homoserine exporter RhtA</fullName>
    </recommendedName>
</protein>